<keyword id="KW-1185">Reference proteome</keyword>
<keyword id="KW-0678">Repressor</keyword>
<keyword id="KW-0346">Stress response</keyword>
<keyword id="KW-0804">Transcription</keyword>
<keyword id="KW-0805">Transcription regulation</keyword>
<protein>
    <recommendedName>
        <fullName evidence="1">Heat-inducible transcription repressor HrcA</fullName>
    </recommendedName>
</protein>
<accession>Q12DY9</accession>
<name>HRCA_POLSJ</name>
<comment type="function">
    <text evidence="1">Negative regulator of class I heat shock genes (grpE-dnaK-dnaJ and groELS operons). Prevents heat-shock induction of these operons.</text>
</comment>
<comment type="similarity">
    <text evidence="1">Belongs to the HrcA family.</text>
</comment>
<reference key="1">
    <citation type="journal article" date="2008" name="Appl. Environ. Microbiol.">
        <title>The genome of Polaromonas sp. strain JS666: insights into the evolution of a hydrocarbon- and xenobiotic-degrading bacterium, and features of relevance to biotechnology.</title>
        <authorList>
            <person name="Mattes T.E."/>
            <person name="Alexander A.K."/>
            <person name="Richardson P.M."/>
            <person name="Munk A.C."/>
            <person name="Han C.S."/>
            <person name="Stothard P."/>
            <person name="Coleman N.V."/>
        </authorList>
    </citation>
    <scope>NUCLEOTIDE SEQUENCE [LARGE SCALE GENOMIC DNA]</scope>
    <source>
        <strain>JS666 / ATCC BAA-500</strain>
    </source>
</reference>
<gene>
    <name evidence="1" type="primary">hrcA</name>
    <name type="ordered locus">Bpro_1303</name>
</gene>
<proteinExistence type="inferred from homology"/>
<dbReference type="EMBL" id="CP000316">
    <property type="protein sequence ID" value="ABE43253.1"/>
    <property type="molecule type" value="Genomic_DNA"/>
</dbReference>
<dbReference type="RefSeq" id="WP_011482252.1">
    <property type="nucleotide sequence ID" value="NC_007948.1"/>
</dbReference>
<dbReference type="SMR" id="Q12DY9"/>
<dbReference type="STRING" id="296591.Bpro_1303"/>
<dbReference type="KEGG" id="pol:Bpro_1303"/>
<dbReference type="eggNOG" id="COG1420">
    <property type="taxonomic scope" value="Bacteria"/>
</dbReference>
<dbReference type="HOGENOM" id="CLU_050019_0_0_4"/>
<dbReference type="OrthoDB" id="9783139at2"/>
<dbReference type="Proteomes" id="UP000001983">
    <property type="component" value="Chromosome"/>
</dbReference>
<dbReference type="GO" id="GO:0003677">
    <property type="term" value="F:DNA binding"/>
    <property type="evidence" value="ECO:0007669"/>
    <property type="project" value="InterPro"/>
</dbReference>
<dbReference type="GO" id="GO:0045892">
    <property type="term" value="P:negative regulation of DNA-templated transcription"/>
    <property type="evidence" value="ECO:0007669"/>
    <property type="project" value="UniProtKB-UniRule"/>
</dbReference>
<dbReference type="Gene3D" id="3.30.450.40">
    <property type="match status" value="1"/>
</dbReference>
<dbReference type="Gene3D" id="3.30.390.60">
    <property type="entry name" value="Heat-inducible transcription repressor hrca homolog, domain 3"/>
    <property type="match status" value="1"/>
</dbReference>
<dbReference type="Gene3D" id="1.10.10.10">
    <property type="entry name" value="Winged helix-like DNA-binding domain superfamily/Winged helix DNA-binding domain"/>
    <property type="match status" value="1"/>
</dbReference>
<dbReference type="HAMAP" id="MF_00081">
    <property type="entry name" value="HrcA"/>
    <property type="match status" value="1"/>
</dbReference>
<dbReference type="InterPro" id="IPR029016">
    <property type="entry name" value="GAF-like_dom_sf"/>
</dbReference>
<dbReference type="InterPro" id="IPR002571">
    <property type="entry name" value="HrcA"/>
</dbReference>
<dbReference type="InterPro" id="IPR021153">
    <property type="entry name" value="HrcA_C"/>
</dbReference>
<dbReference type="InterPro" id="IPR036388">
    <property type="entry name" value="WH-like_DNA-bd_sf"/>
</dbReference>
<dbReference type="InterPro" id="IPR036390">
    <property type="entry name" value="WH_DNA-bd_sf"/>
</dbReference>
<dbReference type="InterPro" id="IPR005104">
    <property type="entry name" value="WHTH_HrcA_DNA-bd"/>
</dbReference>
<dbReference type="InterPro" id="IPR023120">
    <property type="entry name" value="WHTH_transcript_rep_HrcA_IDD"/>
</dbReference>
<dbReference type="NCBIfam" id="TIGR00331">
    <property type="entry name" value="hrcA"/>
    <property type="match status" value="1"/>
</dbReference>
<dbReference type="PANTHER" id="PTHR34824">
    <property type="entry name" value="HEAT-INDUCIBLE TRANSCRIPTION REPRESSOR HRCA"/>
    <property type="match status" value="1"/>
</dbReference>
<dbReference type="PANTHER" id="PTHR34824:SF1">
    <property type="entry name" value="HEAT-INDUCIBLE TRANSCRIPTION REPRESSOR HRCA"/>
    <property type="match status" value="1"/>
</dbReference>
<dbReference type="Pfam" id="PF01628">
    <property type="entry name" value="HrcA"/>
    <property type="match status" value="1"/>
</dbReference>
<dbReference type="Pfam" id="PF03444">
    <property type="entry name" value="HrcA_DNA-bdg"/>
    <property type="match status" value="1"/>
</dbReference>
<dbReference type="PIRSF" id="PIRSF005485">
    <property type="entry name" value="HrcA"/>
    <property type="match status" value="1"/>
</dbReference>
<dbReference type="SUPFAM" id="SSF55781">
    <property type="entry name" value="GAF domain-like"/>
    <property type="match status" value="1"/>
</dbReference>
<dbReference type="SUPFAM" id="SSF46785">
    <property type="entry name" value="Winged helix' DNA-binding domain"/>
    <property type="match status" value="1"/>
</dbReference>
<evidence type="ECO:0000255" key="1">
    <source>
        <dbReference type="HAMAP-Rule" id="MF_00081"/>
    </source>
</evidence>
<organism>
    <name type="scientific">Polaromonas sp. (strain JS666 / ATCC BAA-500)</name>
    <dbReference type="NCBI Taxonomy" id="296591"/>
    <lineage>
        <taxon>Bacteria</taxon>
        <taxon>Pseudomonadati</taxon>
        <taxon>Pseudomonadota</taxon>
        <taxon>Betaproteobacteria</taxon>
        <taxon>Burkholderiales</taxon>
        <taxon>Comamonadaceae</taxon>
        <taxon>Polaromonas</taxon>
    </lineage>
</organism>
<sequence length="338" mass="37358">MLDDRARLLLKALVERYIADGQPVGSRTLSRASGLELSPATIRNVMSDLEELGLIVSPHTSAGRIPTARGYRLFVDTMLTTQRDQLSAGHITAPRLAPDQPQKVISNAAHMLSSLSQFVGVVMAPRRTSVFRHIEFLRLSEKRFLVIIVSPDGDVQNRVIFTEADYTQSQLIEASNFLNSHYAGMAIEEVRERLQNEVEALRGEIATLMQAAVQVSSEAIESRDEVVVSGERNLLAVSDFSSDMGNLRKLFDLFEQKAQLMRLLDVSSRAEGVRIYIGGESQVIPYQELSVVTAPYEVDGQVVGTLGVIGPMRMPYEKMIQIVDITSKLVSTALSHSK</sequence>
<feature type="chain" id="PRO_1000118311" description="Heat-inducible transcription repressor HrcA">
    <location>
        <begin position="1"/>
        <end position="338"/>
    </location>
</feature>